<proteinExistence type="inferred from homology"/>
<organism>
    <name type="scientific">Human papillomavirus 27</name>
    <dbReference type="NCBI Taxonomy" id="333752"/>
    <lineage>
        <taxon>Viruses</taxon>
        <taxon>Monodnaviria</taxon>
        <taxon>Shotokuvirae</taxon>
        <taxon>Cossaviricota</taxon>
        <taxon>Papovaviricetes</taxon>
        <taxon>Zurhausenvirales</taxon>
        <taxon>Papillomaviridae</taxon>
        <taxon>Firstpapillomavirinae</taxon>
        <taxon>Alphapapillomavirus</taxon>
        <taxon>Alphapapillomavirus 4</taxon>
    </lineage>
</organism>
<feature type="chain" id="PRO_0000133594" description="Minor capsid protein L2">
    <location>
        <begin position="1"/>
        <end position="464"/>
    </location>
</feature>
<feature type="short sequence motif" description="Nuclear localization signal" evidence="1">
    <location>
        <begin position="1"/>
        <end position="10"/>
    </location>
</feature>
<feature type="short sequence motif" description="Nuclear localization signal" evidence="1">
    <location>
        <begin position="445"/>
        <end position="453"/>
    </location>
</feature>
<feature type="disulfide bond" evidence="1">
    <location>
        <begin position="19"/>
        <end position="25"/>
    </location>
</feature>
<name>VL2_HPV27</name>
<dbReference type="EMBL" id="X74473">
    <property type="protein sequence ID" value="CAA52540.1"/>
    <property type="molecule type" value="Genomic_DNA"/>
</dbReference>
<dbReference type="PIR" id="S36501">
    <property type="entry name" value="S36501"/>
</dbReference>
<dbReference type="Proteomes" id="UP000009114">
    <property type="component" value="Genome"/>
</dbReference>
<dbReference type="GO" id="GO:0043657">
    <property type="term" value="C:host cell"/>
    <property type="evidence" value="ECO:0007669"/>
    <property type="project" value="GOC"/>
</dbReference>
<dbReference type="GO" id="GO:0044174">
    <property type="term" value="C:host cell endosome"/>
    <property type="evidence" value="ECO:0007669"/>
    <property type="project" value="UniProtKB-KW"/>
</dbReference>
<dbReference type="GO" id="GO:0044177">
    <property type="term" value="C:host cell Golgi apparatus"/>
    <property type="evidence" value="ECO:0007669"/>
    <property type="project" value="UniProtKB-SubCell"/>
</dbReference>
<dbReference type="GO" id="GO:0042025">
    <property type="term" value="C:host cell nucleus"/>
    <property type="evidence" value="ECO:0007669"/>
    <property type="project" value="UniProtKB-SubCell"/>
</dbReference>
<dbReference type="GO" id="GO:0019028">
    <property type="term" value="C:viral capsid"/>
    <property type="evidence" value="ECO:0007669"/>
    <property type="project" value="UniProtKB-UniRule"/>
</dbReference>
<dbReference type="GO" id="GO:0003677">
    <property type="term" value="F:DNA binding"/>
    <property type="evidence" value="ECO:0007669"/>
    <property type="project" value="UniProtKB-UniRule"/>
</dbReference>
<dbReference type="GO" id="GO:0005198">
    <property type="term" value="F:structural molecule activity"/>
    <property type="evidence" value="ECO:0007669"/>
    <property type="project" value="UniProtKB-UniRule"/>
</dbReference>
<dbReference type="GO" id="GO:0075521">
    <property type="term" value="P:microtubule-dependent intracellular transport of viral material towards nucleus"/>
    <property type="evidence" value="ECO:0007669"/>
    <property type="project" value="UniProtKB-UniRule"/>
</dbReference>
<dbReference type="GO" id="GO:0046718">
    <property type="term" value="P:symbiont entry into host cell"/>
    <property type="evidence" value="ECO:0007669"/>
    <property type="project" value="UniProtKB-KW"/>
</dbReference>
<dbReference type="GO" id="GO:0075732">
    <property type="term" value="P:viral penetration into host nucleus"/>
    <property type="evidence" value="ECO:0007669"/>
    <property type="project" value="UniProtKB-KW"/>
</dbReference>
<dbReference type="HAMAP" id="MF_04003">
    <property type="entry name" value="PPV_L2"/>
    <property type="match status" value="1"/>
</dbReference>
<dbReference type="InterPro" id="IPR000784">
    <property type="entry name" value="Late_L2"/>
</dbReference>
<dbReference type="Pfam" id="PF00513">
    <property type="entry name" value="Late_protein_L2"/>
    <property type="match status" value="1"/>
</dbReference>
<organismHost>
    <name type="scientific">Homo sapiens</name>
    <name type="common">Human</name>
    <dbReference type="NCBI Taxonomy" id="9606"/>
</organismHost>
<accession>P36755</accession>
<evidence type="ECO:0000255" key="1">
    <source>
        <dbReference type="HAMAP-Rule" id="MF_04003"/>
    </source>
</evidence>
<reference key="1">
    <citation type="journal article" date="1994" name="Curr. Top. Microbiol. Immunol.">
        <title>Primer-directed sequencing of human papillomavirus types.</title>
        <authorList>
            <person name="Delius H."/>
            <person name="Hofmann B."/>
        </authorList>
    </citation>
    <scope>NUCLEOTIDE SEQUENCE [GENOMIC DNA]</scope>
</reference>
<protein>
    <recommendedName>
        <fullName evidence="1">Minor capsid protein L2</fullName>
    </recommendedName>
</protein>
<keyword id="KW-0167">Capsid protein</keyword>
<keyword id="KW-1176">Cytoplasmic inwards viral transport</keyword>
<keyword id="KW-1015">Disulfide bond</keyword>
<keyword id="KW-0238">DNA-binding</keyword>
<keyword id="KW-1039">Host endosome</keyword>
<keyword id="KW-1040">Host Golgi apparatus</keyword>
<keyword id="KW-1048">Host nucleus</keyword>
<keyword id="KW-0945">Host-virus interaction</keyword>
<keyword id="KW-0426">Late protein</keyword>
<keyword id="KW-1177">Microtubular inwards viral transport</keyword>
<keyword id="KW-0597">Phosphoprotein</keyword>
<keyword id="KW-1185">Reference proteome</keyword>
<keyword id="KW-1163">Viral penetration into host nucleus</keyword>
<keyword id="KW-0946">Virion</keyword>
<keyword id="KW-1160">Virus entry into host cell</keyword>
<gene>
    <name evidence="1" type="primary">L2</name>
</gene>
<comment type="function">
    <text evidence="1">Minor protein of the capsid that localizes along the inner surface of the virion, within the central cavities beneath the L1 pentamers. Plays a role in capsid stabilization through interaction with the major capsid protein L1. Once the virion enters the host cell, L2 escorts the genomic DNA into the nucleus by promoting escape from the endosomal compartments and traffic through the host Golgi network. Mechanistically, the C-terminus of L2 possesses a cell-penetrating peptide that protudes from the host endosome, interacts with host cytoplasmic retromer cargo and thereby mediates the capsid delivery to the host trans-Golgi network. Plays a role through its interaction with host dynein in the intracellular microtubule-dependent transport of viral capsid toward the nucleus. Mediates the viral genome import into the nucleus through binding to host importins. Once within the nucleus, L2 localizes viral genomes to host PML bodies in order to activate early gene expression for establishment of infection. Later on, promotes late gene expression by interacting with the viral E2 protein and by inhibiting its transcriptional activation functions. During virion assembly, encapsidates the genome by direct interaction with the viral DNA.</text>
</comment>
<comment type="subunit">
    <text evidence="1">Interacts with major capsid protein L1. Interacts with E2; this interaction inhibits E2 transcriptional activity but not the DNA replication function E2. Interacts with host GADD45GIP1. Interacts with host HSPA8; this interaction is required for L2 nuclear translocation. Interacts with host importins KPNB2 and KPNB3. Forms a complex with importin alpha2-beta1 heterodimers via interaction with the importin alpha2 adapter. Interacts with host DYNLT1; this interaction is essential for virus intracellular transport during entry. Interacts (via C-terminus) with host retromer subunits VPS35 and VPS29.</text>
</comment>
<comment type="subcellular location">
    <subcellularLocation>
        <location evidence="1">Virion</location>
    </subcellularLocation>
    <subcellularLocation>
        <location evidence="1">Host nucleus</location>
    </subcellularLocation>
    <subcellularLocation>
        <location evidence="1">Host early endosome</location>
    </subcellularLocation>
    <subcellularLocation>
        <location evidence="1">Host Golgi apparatus</location>
    </subcellularLocation>
</comment>
<comment type="PTM">
    <text evidence="1">Highly phosphorylated.</text>
</comment>
<comment type="similarity">
    <text evidence="1">Belongs to the papillomaviridae L2 protein family.</text>
</comment>
<sequence>MPRAKRRKRASPTDLYRTCKQAGTCPPDIIPRLEQNTLADKILKWGSLGVFFGGLGIGTGSGTGGRTGYIPVGTRPTTVVDIGVAPKPPVVIEPVGASEPSIVTLVEDSSIINAGASHPTFTGTGGFEVTTSTVTDPAVLDITPSGTSVQVSSSSFLNPLYTEPAIVEAPQTGEVSGHVLVSTATSGSHGYEEIPMQTFATSGGSGQEPISSTPLPGVRRVAGPRLYSRANQQVQVRDPAFLERPADLVTFDNPVYDPEETIIFQHPDFHEPPDPDFLDIVALHRPALTSRQGTVRFSRLGRRATLRTRSGKQIGARVHFYHDISPVVPDELEMEPLLPPASTVGSDVLYDVYADPDVLQPLDDYYPAPRGSLANTTVSASSASTLRGSTTAPLSGGVDVPVYTGPDIEPPVVPGLGPLIPVAPSLPSSVYIFGGDYYLLPSYILWPKRRKRVNYFFADGFVAA</sequence>